<accession>C1DBX7</accession>
<reference key="1">
    <citation type="journal article" date="2009" name="PLoS Genet.">
        <title>The complete genome and proteome of Laribacter hongkongensis reveal potential mechanisms for adaptations to different temperatures and habitats.</title>
        <authorList>
            <person name="Woo P.C.Y."/>
            <person name="Lau S.K.P."/>
            <person name="Tse H."/>
            <person name="Teng J.L.L."/>
            <person name="Curreem S.O."/>
            <person name="Tsang A.K.L."/>
            <person name="Fan R.Y.Y."/>
            <person name="Wong G.K.M."/>
            <person name="Huang Y."/>
            <person name="Loman N.J."/>
            <person name="Snyder L.A.S."/>
            <person name="Cai J.J."/>
            <person name="Huang J.-D."/>
            <person name="Mak W."/>
            <person name="Pallen M.J."/>
            <person name="Lok S."/>
            <person name="Yuen K.-Y."/>
        </authorList>
    </citation>
    <scope>NUCLEOTIDE SEQUENCE [LARGE SCALE GENOMIC DNA]</scope>
    <source>
        <strain>HLHK9</strain>
    </source>
</reference>
<gene>
    <name evidence="1" type="primary">murA</name>
    <name type="ordered locus">LHK_02549</name>
</gene>
<feature type="chain" id="PRO_1000119117" description="UDP-N-acetylglucosamine 1-carboxyvinyltransferase">
    <location>
        <begin position="1"/>
        <end position="417"/>
    </location>
</feature>
<feature type="active site" description="Proton donor" evidence="1">
    <location>
        <position position="117"/>
    </location>
</feature>
<feature type="binding site" evidence="1">
    <location>
        <begin position="22"/>
        <end position="23"/>
    </location>
    <ligand>
        <name>phosphoenolpyruvate</name>
        <dbReference type="ChEBI" id="CHEBI:58702"/>
    </ligand>
</feature>
<feature type="binding site" evidence="1">
    <location>
        <position position="93"/>
    </location>
    <ligand>
        <name>UDP-N-acetyl-alpha-D-glucosamine</name>
        <dbReference type="ChEBI" id="CHEBI:57705"/>
    </ligand>
</feature>
<feature type="binding site" evidence="1">
    <location>
        <begin position="122"/>
        <end position="126"/>
    </location>
    <ligand>
        <name>UDP-N-acetyl-alpha-D-glucosamine</name>
        <dbReference type="ChEBI" id="CHEBI:57705"/>
    </ligand>
</feature>
<feature type="binding site" evidence="1">
    <location>
        <position position="304"/>
    </location>
    <ligand>
        <name>UDP-N-acetyl-alpha-D-glucosamine</name>
        <dbReference type="ChEBI" id="CHEBI:57705"/>
    </ligand>
</feature>
<feature type="binding site" evidence="1">
    <location>
        <position position="326"/>
    </location>
    <ligand>
        <name>UDP-N-acetyl-alpha-D-glucosamine</name>
        <dbReference type="ChEBI" id="CHEBI:57705"/>
    </ligand>
</feature>
<feature type="modified residue" description="2-(S-cysteinyl)pyruvic acid O-phosphothioketal" evidence="1">
    <location>
        <position position="117"/>
    </location>
</feature>
<dbReference type="EC" id="2.5.1.7" evidence="1"/>
<dbReference type="EMBL" id="CP001154">
    <property type="protein sequence ID" value="ACO75530.1"/>
    <property type="molecule type" value="Genomic_DNA"/>
</dbReference>
<dbReference type="RefSeq" id="WP_012698016.1">
    <property type="nucleotide sequence ID" value="NC_012559.1"/>
</dbReference>
<dbReference type="SMR" id="C1DBX7"/>
<dbReference type="STRING" id="557598.LHK_02549"/>
<dbReference type="KEGG" id="lhk:LHK_02549"/>
<dbReference type="eggNOG" id="COG0766">
    <property type="taxonomic scope" value="Bacteria"/>
</dbReference>
<dbReference type="HOGENOM" id="CLU_027387_0_0_4"/>
<dbReference type="UniPathway" id="UPA00219"/>
<dbReference type="Proteomes" id="UP000002010">
    <property type="component" value="Chromosome"/>
</dbReference>
<dbReference type="GO" id="GO:0005737">
    <property type="term" value="C:cytoplasm"/>
    <property type="evidence" value="ECO:0007669"/>
    <property type="project" value="UniProtKB-SubCell"/>
</dbReference>
<dbReference type="GO" id="GO:0008760">
    <property type="term" value="F:UDP-N-acetylglucosamine 1-carboxyvinyltransferase activity"/>
    <property type="evidence" value="ECO:0007669"/>
    <property type="project" value="UniProtKB-UniRule"/>
</dbReference>
<dbReference type="GO" id="GO:0051301">
    <property type="term" value="P:cell division"/>
    <property type="evidence" value="ECO:0007669"/>
    <property type="project" value="UniProtKB-KW"/>
</dbReference>
<dbReference type="GO" id="GO:0071555">
    <property type="term" value="P:cell wall organization"/>
    <property type="evidence" value="ECO:0007669"/>
    <property type="project" value="UniProtKB-KW"/>
</dbReference>
<dbReference type="GO" id="GO:0009252">
    <property type="term" value="P:peptidoglycan biosynthetic process"/>
    <property type="evidence" value="ECO:0007669"/>
    <property type="project" value="UniProtKB-UniRule"/>
</dbReference>
<dbReference type="GO" id="GO:0008360">
    <property type="term" value="P:regulation of cell shape"/>
    <property type="evidence" value="ECO:0007669"/>
    <property type="project" value="UniProtKB-KW"/>
</dbReference>
<dbReference type="GO" id="GO:0019277">
    <property type="term" value="P:UDP-N-acetylgalactosamine biosynthetic process"/>
    <property type="evidence" value="ECO:0007669"/>
    <property type="project" value="InterPro"/>
</dbReference>
<dbReference type="CDD" id="cd01555">
    <property type="entry name" value="UdpNAET"/>
    <property type="match status" value="1"/>
</dbReference>
<dbReference type="FunFam" id="3.65.10.10:FF:000002">
    <property type="entry name" value="UDP-N-acetylglucosamine 1-carboxyvinyltransferase"/>
    <property type="match status" value="1"/>
</dbReference>
<dbReference type="Gene3D" id="3.65.10.10">
    <property type="entry name" value="Enolpyruvate transferase domain"/>
    <property type="match status" value="2"/>
</dbReference>
<dbReference type="HAMAP" id="MF_00111">
    <property type="entry name" value="MurA"/>
    <property type="match status" value="1"/>
</dbReference>
<dbReference type="InterPro" id="IPR001986">
    <property type="entry name" value="Enolpyruvate_Tfrase_dom"/>
</dbReference>
<dbReference type="InterPro" id="IPR036968">
    <property type="entry name" value="Enolpyruvate_Tfrase_sf"/>
</dbReference>
<dbReference type="InterPro" id="IPR050068">
    <property type="entry name" value="MurA_subfamily"/>
</dbReference>
<dbReference type="InterPro" id="IPR013792">
    <property type="entry name" value="RNA3'P_cycl/enolpyr_Trfase_a/b"/>
</dbReference>
<dbReference type="InterPro" id="IPR005750">
    <property type="entry name" value="UDP_GlcNAc_COvinyl_MurA"/>
</dbReference>
<dbReference type="NCBIfam" id="TIGR01072">
    <property type="entry name" value="murA"/>
    <property type="match status" value="1"/>
</dbReference>
<dbReference type="NCBIfam" id="NF006873">
    <property type="entry name" value="PRK09369.1"/>
    <property type="match status" value="1"/>
</dbReference>
<dbReference type="PANTHER" id="PTHR43783">
    <property type="entry name" value="UDP-N-ACETYLGLUCOSAMINE 1-CARBOXYVINYLTRANSFERASE"/>
    <property type="match status" value="1"/>
</dbReference>
<dbReference type="PANTHER" id="PTHR43783:SF1">
    <property type="entry name" value="UDP-N-ACETYLGLUCOSAMINE 1-CARBOXYVINYLTRANSFERASE"/>
    <property type="match status" value="1"/>
</dbReference>
<dbReference type="Pfam" id="PF00275">
    <property type="entry name" value="EPSP_synthase"/>
    <property type="match status" value="1"/>
</dbReference>
<dbReference type="SUPFAM" id="SSF55205">
    <property type="entry name" value="EPT/RTPC-like"/>
    <property type="match status" value="1"/>
</dbReference>
<sequence length="417" mass="44169">MEKLKITGNGPLKGDITVSGAKNAALPILCASLLTADTLRLTNVPQLRDVMTTQKLLQGMGARVMTDNVHEFELSAAQVSDTCAPYELVKTMRASILVLGPTLARFGEASVSLPGGCAIGSRPVDQHIKGLAAMGADIVIEHGYVKARGRLKGARVVMDMVTVTGTENLLMAATLADGTTVLENAAREPEVTDLAVCLNKMGARISGLGTDRLVIEGVERLHGAEHAVMPDRIEAGTFLVAGAMTQGKLVLRNARAADMGAILDKLAEAGAVIEAGDDWIALDMPQRPRAVSLRTLPYPAFPTDMQAQFMAMNCIAEGVGSIKETIFENRFMHVPELIRMGARIDVEGNLATTHGVNKLSGATVMATDLRASASLVLAGLVADGTTIVDRIYHLDRGYEHIERKLGAVGAQIERTGG</sequence>
<evidence type="ECO:0000255" key="1">
    <source>
        <dbReference type="HAMAP-Rule" id="MF_00111"/>
    </source>
</evidence>
<keyword id="KW-0131">Cell cycle</keyword>
<keyword id="KW-0132">Cell division</keyword>
<keyword id="KW-0133">Cell shape</keyword>
<keyword id="KW-0961">Cell wall biogenesis/degradation</keyword>
<keyword id="KW-0963">Cytoplasm</keyword>
<keyword id="KW-0573">Peptidoglycan synthesis</keyword>
<keyword id="KW-0670">Pyruvate</keyword>
<keyword id="KW-1185">Reference proteome</keyword>
<keyword id="KW-0808">Transferase</keyword>
<name>MURA_LARHH</name>
<organism>
    <name type="scientific">Laribacter hongkongensis (strain HLHK9)</name>
    <dbReference type="NCBI Taxonomy" id="557598"/>
    <lineage>
        <taxon>Bacteria</taxon>
        <taxon>Pseudomonadati</taxon>
        <taxon>Pseudomonadota</taxon>
        <taxon>Betaproteobacteria</taxon>
        <taxon>Neisseriales</taxon>
        <taxon>Aquaspirillaceae</taxon>
        <taxon>Laribacter</taxon>
    </lineage>
</organism>
<comment type="function">
    <text evidence="1">Cell wall formation. Adds enolpyruvyl to UDP-N-acetylglucosamine.</text>
</comment>
<comment type="catalytic activity">
    <reaction evidence="1">
        <text>phosphoenolpyruvate + UDP-N-acetyl-alpha-D-glucosamine = UDP-N-acetyl-3-O-(1-carboxyvinyl)-alpha-D-glucosamine + phosphate</text>
        <dbReference type="Rhea" id="RHEA:18681"/>
        <dbReference type="ChEBI" id="CHEBI:43474"/>
        <dbReference type="ChEBI" id="CHEBI:57705"/>
        <dbReference type="ChEBI" id="CHEBI:58702"/>
        <dbReference type="ChEBI" id="CHEBI:68483"/>
        <dbReference type="EC" id="2.5.1.7"/>
    </reaction>
</comment>
<comment type="pathway">
    <text evidence="1">Cell wall biogenesis; peptidoglycan biosynthesis.</text>
</comment>
<comment type="subcellular location">
    <subcellularLocation>
        <location evidence="1">Cytoplasm</location>
    </subcellularLocation>
</comment>
<comment type="similarity">
    <text evidence="1">Belongs to the EPSP synthase family. MurA subfamily.</text>
</comment>
<proteinExistence type="inferred from homology"/>
<protein>
    <recommendedName>
        <fullName evidence="1">UDP-N-acetylglucosamine 1-carboxyvinyltransferase</fullName>
        <ecNumber evidence="1">2.5.1.7</ecNumber>
    </recommendedName>
    <alternativeName>
        <fullName evidence="1">Enoylpyruvate transferase</fullName>
    </alternativeName>
    <alternativeName>
        <fullName evidence="1">UDP-N-acetylglucosamine enolpyruvyl transferase</fullName>
        <shortName evidence="1">EPT</shortName>
    </alternativeName>
</protein>